<evidence type="ECO:0000250" key="1"/>
<evidence type="ECO:0000305" key="2"/>
<sequence>MQDNALTIALSKGRIFEETLPLLAAAGIVPTEEPEKSRKLIIGTNHENIRLVIVRATDVPTYVRYGAADFGIAGKDVLIEHGGTGLYRPLDLEIAKCRMMVAVRKGFDYEAASQPGCRLKIATKYPEIAASHFAGKGVHVDIIKLYGSMELAPLVGLSDAIVDLVSTGNTLKANGLEAVEHIVDISSRLVVNKAALKTKYALLEPIIQAFGGAVKAK</sequence>
<reference key="1">
    <citation type="journal article" date="2000" name="Science">
        <title>Complete genome sequence of Neisseria meningitidis serogroup B strain MC58.</title>
        <authorList>
            <person name="Tettelin H."/>
            <person name="Saunders N.J."/>
            <person name="Heidelberg J.F."/>
            <person name="Jeffries A.C."/>
            <person name="Nelson K.E."/>
            <person name="Eisen J.A."/>
            <person name="Ketchum K.A."/>
            <person name="Hood D.W."/>
            <person name="Peden J.F."/>
            <person name="Dodson R.J."/>
            <person name="Nelson W.C."/>
            <person name="Gwinn M.L."/>
            <person name="DeBoy R.T."/>
            <person name="Peterson J.D."/>
            <person name="Hickey E.K."/>
            <person name="Haft D.H."/>
            <person name="Salzberg S.L."/>
            <person name="White O."/>
            <person name="Fleischmann R.D."/>
            <person name="Dougherty B.A."/>
            <person name="Mason T.M."/>
            <person name="Ciecko A."/>
            <person name="Parksey D.S."/>
            <person name="Blair E."/>
            <person name="Cittone H."/>
            <person name="Clark E.B."/>
            <person name="Cotton M.D."/>
            <person name="Utterback T.R."/>
            <person name="Khouri H.M."/>
            <person name="Qin H."/>
            <person name="Vamathevan J.J."/>
            <person name="Gill J."/>
            <person name="Scarlato V."/>
            <person name="Masignani V."/>
            <person name="Pizza M."/>
            <person name="Grandi G."/>
            <person name="Sun L."/>
            <person name="Smith H.O."/>
            <person name="Fraser C.M."/>
            <person name="Moxon E.R."/>
            <person name="Rappuoli R."/>
            <person name="Venter J.C."/>
        </authorList>
    </citation>
    <scope>NUCLEOTIDE SEQUENCE [LARGE SCALE GENOMIC DNA]</scope>
    <source>
        <strain>ATCC BAA-335 / MC58</strain>
    </source>
</reference>
<protein>
    <recommendedName>
        <fullName>ATP phosphoribosyltransferase</fullName>
        <shortName>ATP-PRT</shortName>
        <shortName>ATP-PRTase</shortName>
        <ecNumber>2.4.2.17</ecNumber>
    </recommendedName>
</protein>
<name>HIS1_NEIMB</name>
<organism>
    <name type="scientific">Neisseria meningitidis serogroup B (strain ATCC BAA-335 / MC58)</name>
    <dbReference type="NCBI Taxonomy" id="122586"/>
    <lineage>
        <taxon>Bacteria</taxon>
        <taxon>Pseudomonadati</taxon>
        <taxon>Pseudomonadota</taxon>
        <taxon>Betaproteobacteria</taxon>
        <taxon>Neisseriales</taxon>
        <taxon>Neisseriaceae</taxon>
        <taxon>Neisseria</taxon>
    </lineage>
</organism>
<dbReference type="EC" id="2.4.2.17"/>
<dbReference type="EMBL" id="AE002098">
    <property type="protein sequence ID" value="AAF41932.1"/>
    <property type="molecule type" value="Genomic_DNA"/>
</dbReference>
<dbReference type="PIR" id="C81067">
    <property type="entry name" value="C81067"/>
</dbReference>
<dbReference type="RefSeq" id="NP_274585.1">
    <property type="nucleotide sequence ID" value="NC_003112.2"/>
</dbReference>
<dbReference type="RefSeq" id="WP_002261539.1">
    <property type="nucleotide sequence ID" value="NC_003112.2"/>
</dbReference>
<dbReference type="SMR" id="P64347"/>
<dbReference type="FunCoup" id="P64347">
    <property type="interactions" value="431"/>
</dbReference>
<dbReference type="STRING" id="122586.NMB1579"/>
<dbReference type="PaxDb" id="122586-NMB1579"/>
<dbReference type="GeneID" id="93387808"/>
<dbReference type="KEGG" id="nme:NMB1579"/>
<dbReference type="PATRIC" id="fig|122586.8.peg.2030"/>
<dbReference type="HOGENOM" id="CLU_038115_2_0_4"/>
<dbReference type="InParanoid" id="P64347"/>
<dbReference type="OrthoDB" id="9801867at2"/>
<dbReference type="UniPathway" id="UPA00031">
    <property type="reaction ID" value="UER00006"/>
</dbReference>
<dbReference type="Proteomes" id="UP000000425">
    <property type="component" value="Chromosome"/>
</dbReference>
<dbReference type="GO" id="GO:0005737">
    <property type="term" value="C:cytoplasm"/>
    <property type="evidence" value="ECO:0007669"/>
    <property type="project" value="UniProtKB-SubCell"/>
</dbReference>
<dbReference type="GO" id="GO:0005524">
    <property type="term" value="F:ATP binding"/>
    <property type="evidence" value="ECO:0007669"/>
    <property type="project" value="UniProtKB-KW"/>
</dbReference>
<dbReference type="GO" id="GO:0003879">
    <property type="term" value="F:ATP phosphoribosyltransferase activity"/>
    <property type="evidence" value="ECO:0000318"/>
    <property type="project" value="GO_Central"/>
</dbReference>
<dbReference type="GO" id="GO:0000105">
    <property type="term" value="P:L-histidine biosynthetic process"/>
    <property type="evidence" value="ECO:0000318"/>
    <property type="project" value="GO_Central"/>
</dbReference>
<dbReference type="CDD" id="cd13595">
    <property type="entry name" value="PBP2_HisGs"/>
    <property type="match status" value="1"/>
</dbReference>
<dbReference type="FunFam" id="3.40.190.10:FF:000011">
    <property type="entry name" value="ATP phosphoribosyltransferase"/>
    <property type="match status" value="1"/>
</dbReference>
<dbReference type="Gene3D" id="3.40.190.10">
    <property type="entry name" value="Periplasmic binding protein-like II"/>
    <property type="match status" value="2"/>
</dbReference>
<dbReference type="HAMAP" id="MF_01018">
    <property type="entry name" value="HisG_Short"/>
    <property type="match status" value="1"/>
</dbReference>
<dbReference type="InterPro" id="IPR013820">
    <property type="entry name" value="ATP_PRibTrfase_cat"/>
</dbReference>
<dbReference type="InterPro" id="IPR018198">
    <property type="entry name" value="ATP_PRibTrfase_CS"/>
</dbReference>
<dbReference type="InterPro" id="IPR001348">
    <property type="entry name" value="ATP_PRibTrfase_HisG"/>
</dbReference>
<dbReference type="InterPro" id="IPR024893">
    <property type="entry name" value="ATP_PRibTrfase_HisG_short"/>
</dbReference>
<dbReference type="NCBIfam" id="TIGR00070">
    <property type="entry name" value="hisG"/>
    <property type="match status" value="1"/>
</dbReference>
<dbReference type="PANTHER" id="PTHR21403:SF8">
    <property type="entry name" value="ATP PHOSPHORIBOSYLTRANSFERASE"/>
    <property type="match status" value="1"/>
</dbReference>
<dbReference type="PANTHER" id="PTHR21403">
    <property type="entry name" value="ATP PHOSPHORIBOSYLTRANSFERASE ATP-PRTASE"/>
    <property type="match status" value="1"/>
</dbReference>
<dbReference type="Pfam" id="PF01634">
    <property type="entry name" value="HisG"/>
    <property type="match status" value="1"/>
</dbReference>
<dbReference type="SUPFAM" id="SSF53850">
    <property type="entry name" value="Periplasmic binding protein-like II"/>
    <property type="match status" value="1"/>
</dbReference>
<dbReference type="PROSITE" id="PS01316">
    <property type="entry name" value="ATP_P_PHORIBOSYLTR"/>
    <property type="match status" value="1"/>
</dbReference>
<comment type="function">
    <text evidence="1">Catalyzes the condensation of ATP and 5-phosphoribose 1-diphosphate to form N'-(5'-phosphoribosyl)-ATP (PR-ATP). Has a crucial role in the pathway because the rate of histidine biosynthesis seems to be controlled primarily by regulation of HisG enzymatic activity (By similarity).</text>
</comment>
<comment type="catalytic activity">
    <reaction>
        <text>1-(5-phospho-beta-D-ribosyl)-ATP + diphosphate = 5-phospho-alpha-D-ribose 1-diphosphate + ATP</text>
        <dbReference type="Rhea" id="RHEA:18473"/>
        <dbReference type="ChEBI" id="CHEBI:30616"/>
        <dbReference type="ChEBI" id="CHEBI:33019"/>
        <dbReference type="ChEBI" id="CHEBI:58017"/>
        <dbReference type="ChEBI" id="CHEBI:73183"/>
        <dbReference type="EC" id="2.4.2.17"/>
    </reaction>
</comment>
<comment type="pathway">
    <text>Amino-acid biosynthesis; L-histidine biosynthesis; L-histidine from 5-phospho-alpha-D-ribose 1-diphosphate: step 1/9.</text>
</comment>
<comment type="subunit">
    <text evidence="1">Heteromultimer composed of HisG and HisZ subunits.</text>
</comment>
<comment type="subcellular location">
    <subcellularLocation>
        <location evidence="1">Cytoplasm</location>
    </subcellularLocation>
</comment>
<comment type="domain">
    <text>Lacks the C-terminal regulatory region which is replaced by HisZ.</text>
</comment>
<comment type="similarity">
    <text evidence="2">Belongs to the ATP phosphoribosyltransferase family. Short subfamily.</text>
</comment>
<keyword id="KW-0028">Amino-acid biosynthesis</keyword>
<keyword id="KW-0067">ATP-binding</keyword>
<keyword id="KW-0963">Cytoplasm</keyword>
<keyword id="KW-0328">Glycosyltransferase</keyword>
<keyword id="KW-0368">Histidine biosynthesis</keyword>
<keyword id="KW-0547">Nucleotide-binding</keyword>
<keyword id="KW-1185">Reference proteome</keyword>
<keyword id="KW-0808">Transferase</keyword>
<accession>P64347</accession>
<accession>Q9JQS2</accession>
<feature type="chain" id="PRO_0000151919" description="ATP phosphoribosyltransferase">
    <location>
        <begin position="1"/>
        <end position="217"/>
    </location>
</feature>
<gene>
    <name type="primary">hisG</name>
    <name type="ordered locus">NMB1579</name>
</gene>
<proteinExistence type="inferred from homology"/>